<reference key="1">
    <citation type="submission" date="2003-03" db="EMBL/GenBank/DDBJ databases">
        <title>The complete genome sequence of Neisseria gonorrhoeae.</title>
        <authorList>
            <person name="Lewis L.A."/>
            <person name="Gillaspy A.F."/>
            <person name="McLaughlin R.E."/>
            <person name="Gipson M."/>
            <person name="Ducey T.F."/>
            <person name="Ownbey T."/>
            <person name="Hartman K."/>
            <person name="Nydick C."/>
            <person name="Carson M.B."/>
            <person name="Vaughn J."/>
            <person name="Thomson C."/>
            <person name="Song L."/>
            <person name="Lin S."/>
            <person name="Yuan X."/>
            <person name="Najar F."/>
            <person name="Zhan M."/>
            <person name="Ren Q."/>
            <person name="Zhu H."/>
            <person name="Qi S."/>
            <person name="Kenton S.M."/>
            <person name="Lai H."/>
            <person name="White J.D."/>
            <person name="Clifton S."/>
            <person name="Roe B.A."/>
            <person name="Dyer D.W."/>
        </authorList>
    </citation>
    <scope>NUCLEOTIDE SEQUENCE [LARGE SCALE GENOMIC DNA]</scope>
    <source>
        <strain>ATCC 700825 / FA 1090</strain>
    </source>
</reference>
<evidence type="ECO:0000255" key="1">
    <source>
        <dbReference type="HAMAP-Rule" id="MF_01366"/>
    </source>
</evidence>
<evidence type="ECO:0000305" key="2"/>
<accession>Q5F5A5</accession>
<name>RL13_NEIG1</name>
<keyword id="KW-1185">Reference proteome</keyword>
<keyword id="KW-0687">Ribonucleoprotein</keyword>
<keyword id="KW-0689">Ribosomal protein</keyword>
<feature type="chain" id="PRO_0000261753" description="Large ribosomal subunit protein uL13">
    <location>
        <begin position="1"/>
        <end position="143"/>
    </location>
</feature>
<protein>
    <recommendedName>
        <fullName evidence="1">Large ribosomal subunit protein uL13</fullName>
    </recommendedName>
    <alternativeName>
        <fullName evidence="2">50S ribosomal protein L13</fullName>
    </alternativeName>
</protein>
<gene>
    <name evidence="1" type="primary">rplM</name>
    <name type="ordered locus">NGO_2024</name>
</gene>
<dbReference type="EMBL" id="AE004969">
    <property type="protein sequence ID" value="AAW90632.1"/>
    <property type="molecule type" value="Genomic_DNA"/>
</dbReference>
<dbReference type="RefSeq" id="WP_003686944.1">
    <property type="nucleotide sequence ID" value="NC_002946.2"/>
</dbReference>
<dbReference type="RefSeq" id="YP_209044.1">
    <property type="nucleotide sequence ID" value="NC_002946.2"/>
</dbReference>
<dbReference type="SMR" id="Q5F5A5"/>
<dbReference type="STRING" id="242231.NGO_2024"/>
<dbReference type="GeneID" id="66754087"/>
<dbReference type="KEGG" id="ngo:NGO_2024"/>
<dbReference type="PATRIC" id="fig|242231.10.peg.2439"/>
<dbReference type="HOGENOM" id="CLU_082184_2_2_4"/>
<dbReference type="Proteomes" id="UP000000535">
    <property type="component" value="Chromosome"/>
</dbReference>
<dbReference type="GO" id="GO:0022625">
    <property type="term" value="C:cytosolic large ribosomal subunit"/>
    <property type="evidence" value="ECO:0007669"/>
    <property type="project" value="TreeGrafter"/>
</dbReference>
<dbReference type="GO" id="GO:0003729">
    <property type="term" value="F:mRNA binding"/>
    <property type="evidence" value="ECO:0007669"/>
    <property type="project" value="TreeGrafter"/>
</dbReference>
<dbReference type="GO" id="GO:0003735">
    <property type="term" value="F:structural constituent of ribosome"/>
    <property type="evidence" value="ECO:0007669"/>
    <property type="project" value="InterPro"/>
</dbReference>
<dbReference type="GO" id="GO:0017148">
    <property type="term" value="P:negative regulation of translation"/>
    <property type="evidence" value="ECO:0007669"/>
    <property type="project" value="TreeGrafter"/>
</dbReference>
<dbReference type="GO" id="GO:0006412">
    <property type="term" value="P:translation"/>
    <property type="evidence" value="ECO:0007669"/>
    <property type="project" value="UniProtKB-UniRule"/>
</dbReference>
<dbReference type="CDD" id="cd00392">
    <property type="entry name" value="Ribosomal_L13"/>
    <property type="match status" value="1"/>
</dbReference>
<dbReference type="FunFam" id="3.90.1180.10:FF:000001">
    <property type="entry name" value="50S ribosomal protein L13"/>
    <property type="match status" value="1"/>
</dbReference>
<dbReference type="Gene3D" id="3.90.1180.10">
    <property type="entry name" value="Ribosomal protein L13"/>
    <property type="match status" value="1"/>
</dbReference>
<dbReference type="HAMAP" id="MF_01366">
    <property type="entry name" value="Ribosomal_uL13"/>
    <property type="match status" value="1"/>
</dbReference>
<dbReference type="InterPro" id="IPR005822">
    <property type="entry name" value="Ribosomal_uL13"/>
</dbReference>
<dbReference type="InterPro" id="IPR005823">
    <property type="entry name" value="Ribosomal_uL13_bac-type"/>
</dbReference>
<dbReference type="InterPro" id="IPR036899">
    <property type="entry name" value="Ribosomal_uL13_sf"/>
</dbReference>
<dbReference type="NCBIfam" id="TIGR01066">
    <property type="entry name" value="rplM_bact"/>
    <property type="match status" value="1"/>
</dbReference>
<dbReference type="PANTHER" id="PTHR11545:SF2">
    <property type="entry name" value="LARGE RIBOSOMAL SUBUNIT PROTEIN UL13M"/>
    <property type="match status" value="1"/>
</dbReference>
<dbReference type="PANTHER" id="PTHR11545">
    <property type="entry name" value="RIBOSOMAL PROTEIN L13"/>
    <property type="match status" value="1"/>
</dbReference>
<dbReference type="Pfam" id="PF00572">
    <property type="entry name" value="Ribosomal_L13"/>
    <property type="match status" value="1"/>
</dbReference>
<dbReference type="PIRSF" id="PIRSF002181">
    <property type="entry name" value="Ribosomal_L13"/>
    <property type="match status" value="1"/>
</dbReference>
<dbReference type="SUPFAM" id="SSF52161">
    <property type="entry name" value="Ribosomal protein L13"/>
    <property type="match status" value="1"/>
</dbReference>
<sequence length="143" mass="16238">MKTFSAKPHEVKREWFVIDAQDKVLGRVATEVASRLRGKHKPEYTPHVDTGDYIIVINADKLRVTGAKFEDKKYFRHSGFPGGIYERTFREMQDQFPGRALEQAVKGMLPKGPLGYAMIKKLKVYAGAEHAHAAQQPKVLELK</sequence>
<organism>
    <name type="scientific">Neisseria gonorrhoeae (strain ATCC 700825 / FA 1090)</name>
    <dbReference type="NCBI Taxonomy" id="242231"/>
    <lineage>
        <taxon>Bacteria</taxon>
        <taxon>Pseudomonadati</taxon>
        <taxon>Pseudomonadota</taxon>
        <taxon>Betaproteobacteria</taxon>
        <taxon>Neisseriales</taxon>
        <taxon>Neisseriaceae</taxon>
        <taxon>Neisseria</taxon>
    </lineage>
</organism>
<proteinExistence type="inferred from homology"/>
<comment type="function">
    <text evidence="1">This protein is one of the early assembly proteins of the 50S ribosomal subunit, although it is not seen to bind rRNA by itself. It is important during the early stages of 50S assembly.</text>
</comment>
<comment type="subunit">
    <text evidence="1">Part of the 50S ribosomal subunit.</text>
</comment>
<comment type="similarity">
    <text evidence="1">Belongs to the universal ribosomal protein uL13 family.</text>
</comment>